<gene>
    <name evidence="1" type="primary">aroE</name>
    <name type="ordered locus">Gbem_2596</name>
</gene>
<feature type="chain" id="PRO_1000100119" description="Shikimate dehydrogenase (NADP(+))">
    <location>
        <begin position="1"/>
        <end position="290"/>
    </location>
</feature>
<feature type="active site" description="Proton acceptor" evidence="1">
    <location>
        <position position="71"/>
    </location>
</feature>
<feature type="binding site" evidence="1">
    <location>
        <begin position="20"/>
        <end position="22"/>
    </location>
    <ligand>
        <name>shikimate</name>
        <dbReference type="ChEBI" id="CHEBI:36208"/>
    </ligand>
</feature>
<feature type="binding site" evidence="1">
    <location>
        <position position="67"/>
    </location>
    <ligand>
        <name>shikimate</name>
        <dbReference type="ChEBI" id="CHEBI:36208"/>
    </ligand>
</feature>
<feature type="binding site" evidence="1">
    <location>
        <position position="92"/>
    </location>
    <ligand>
        <name>shikimate</name>
        <dbReference type="ChEBI" id="CHEBI:36208"/>
    </ligand>
</feature>
<feature type="binding site" evidence="1">
    <location>
        <position position="107"/>
    </location>
    <ligand>
        <name>shikimate</name>
        <dbReference type="ChEBI" id="CHEBI:36208"/>
    </ligand>
</feature>
<feature type="binding site" evidence="1">
    <location>
        <begin position="132"/>
        <end position="136"/>
    </location>
    <ligand>
        <name>NADP(+)</name>
        <dbReference type="ChEBI" id="CHEBI:58349"/>
    </ligand>
</feature>
<feature type="binding site" evidence="1">
    <location>
        <position position="228"/>
    </location>
    <ligand>
        <name>NADP(+)</name>
        <dbReference type="ChEBI" id="CHEBI:58349"/>
    </ligand>
</feature>
<feature type="binding site" evidence="1">
    <location>
        <position position="230"/>
    </location>
    <ligand>
        <name>shikimate</name>
        <dbReference type="ChEBI" id="CHEBI:36208"/>
    </ligand>
</feature>
<feature type="binding site" evidence="1">
    <location>
        <position position="251"/>
    </location>
    <ligand>
        <name>NADP(+)</name>
        <dbReference type="ChEBI" id="CHEBI:58349"/>
    </ligand>
</feature>
<reference key="1">
    <citation type="submission" date="2008-07" db="EMBL/GenBank/DDBJ databases">
        <title>Complete sequence of Geobacter bemidjiensis BEM.</title>
        <authorList>
            <consortium name="US DOE Joint Genome Institute"/>
            <person name="Lucas S."/>
            <person name="Copeland A."/>
            <person name="Lapidus A."/>
            <person name="Glavina del Rio T."/>
            <person name="Dalin E."/>
            <person name="Tice H."/>
            <person name="Bruce D."/>
            <person name="Goodwin L."/>
            <person name="Pitluck S."/>
            <person name="Kiss H."/>
            <person name="Brettin T."/>
            <person name="Detter J.C."/>
            <person name="Han C."/>
            <person name="Kuske C.R."/>
            <person name="Schmutz J."/>
            <person name="Larimer F."/>
            <person name="Land M."/>
            <person name="Hauser L."/>
            <person name="Kyrpides N."/>
            <person name="Lykidis A."/>
            <person name="Lovley D."/>
            <person name="Richardson P."/>
        </authorList>
    </citation>
    <scope>NUCLEOTIDE SEQUENCE [LARGE SCALE GENOMIC DNA]</scope>
    <source>
        <strain>ATCC BAA-1014 / DSM 16622 / JCM 12645 / Bem</strain>
    </source>
</reference>
<comment type="function">
    <text evidence="1">Involved in the biosynthesis of the chorismate, which leads to the biosynthesis of aromatic amino acids. Catalyzes the reversible NADPH linked reduction of 3-dehydroshikimate (DHSA) to yield shikimate (SA).</text>
</comment>
<comment type="catalytic activity">
    <reaction evidence="1">
        <text>shikimate + NADP(+) = 3-dehydroshikimate + NADPH + H(+)</text>
        <dbReference type="Rhea" id="RHEA:17737"/>
        <dbReference type="ChEBI" id="CHEBI:15378"/>
        <dbReference type="ChEBI" id="CHEBI:16630"/>
        <dbReference type="ChEBI" id="CHEBI:36208"/>
        <dbReference type="ChEBI" id="CHEBI:57783"/>
        <dbReference type="ChEBI" id="CHEBI:58349"/>
        <dbReference type="EC" id="1.1.1.25"/>
    </reaction>
</comment>
<comment type="pathway">
    <text evidence="1">Metabolic intermediate biosynthesis; chorismate biosynthesis; chorismate from D-erythrose 4-phosphate and phosphoenolpyruvate: step 4/7.</text>
</comment>
<comment type="subunit">
    <text evidence="1">Homodimer.</text>
</comment>
<comment type="similarity">
    <text evidence="1">Belongs to the shikimate dehydrogenase family.</text>
</comment>
<protein>
    <recommendedName>
        <fullName evidence="1">Shikimate dehydrogenase (NADP(+))</fullName>
        <shortName evidence="1">SDH</shortName>
        <ecNumber evidence="1">1.1.1.25</ecNumber>
    </recommendedName>
</protein>
<proteinExistence type="inferred from homology"/>
<sequence>MTITGKTKVAGIIGWPVSHSLSPPMHNAAFEALGLDFTYVPFPVAPERLAAGIAGLAALGVVGFSVTIPHKVAILPLLDRVTPEAELIGAVNTVAVEEGALTGYNTDGIGLLSALRSKLGFHPEGRSVLVLGAGGAARSAVASLGLAGAGRVEVANRSPDAGRCLAEAMRERLAGTDFGFQPLGQISDKGYMSSFDLVVNTTSVGMAGDAFAGLDLAALKPGACVYDMVYAPPVTPLLAQAEAAGVPWANGLGMLAAQGEAAFRIWTGAIPPEGCMEKALAARLTTPGNP</sequence>
<keyword id="KW-0028">Amino-acid biosynthesis</keyword>
<keyword id="KW-0057">Aromatic amino acid biosynthesis</keyword>
<keyword id="KW-0521">NADP</keyword>
<keyword id="KW-0560">Oxidoreductase</keyword>
<keyword id="KW-1185">Reference proteome</keyword>
<accession>B5EH68</accession>
<evidence type="ECO:0000255" key="1">
    <source>
        <dbReference type="HAMAP-Rule" id="MF_00222"/>
    </source>
</evidence>
<name>AROE_CITBB</name>
<dbReference type="EC" id="1.1.1.25" evidence="1"/>
<dbReference type="EMBL" id="CP001124">
    <property type="protein sequence ID" value="ACH39604.1"/>
    <property type="molecule type" value="Genomic_DNA"/>
</dbReference>
<dbReference type="RefSeq" id="WP_012531025.1">
    <property type="nucleotide sequence ID" value="NC_011146.1"/>
</dbReference>
<dbReference type="SMR" id="B5EH68"/>
<dbReference type="STRING" id="404380.Gbem_2596"/>
<dbReference type="KEGG" id="gbm:Gbem_2596"/>
<dbReference type="eggNOG" id="COG0169">
    <property type="taxonomic scope" value="Bacteria"/>
</dbReference>
<dbReference type="HOGENOM" id="CLU_044063_4_1_7"/>
<dbReference type="OrthoDB" id="9792692at2"/>
<dbReference type="UniPathway" id="UPA00053">
    <property type="reaction ID" value="UER00087"/>
</dbReference>
<dbReference type="Proteomes" id="UP000008825">
    <property type="component" value="Chromosome"/>
</dbReference>
<dbReference type="GO" id="GO:0005829">
    <property type="term" value="C:cytosol"/>
    <property type="evidence" value="ECO:0007669"/>
    <property type="project" value="TreeGrafter"/>
</dbReference>
<dbReference type="GO" id="GO:0050661">
    <property type="term" value="F:NADP binding"/>
    <property type="evidence" value="ECO:0007669"/>
    <property type="project" value="InterPro"/>
</dbReference>
<dbReference type="GO" id="GO:0004764">
    <property type="term" value="F:shikimate 3-dehydrogenase (NADP+) activity"/>
    <property type="evidence" value="ECO:0007669"/>
    <property type="project" value="UniProtKB-UniRule"/>
</dbReference>
<dbReference type="GO" id="GO:0008652">
    <property type="term" value="P:amino acid biosynthetic process"/>
    <property type="evidence" value="ECO:0007669"/>
    <property type="project" value="UniProtKB-KW"/>
</dbReference>
<dbReference type="GO" id="GO:0009073">
    <property type="term" value="P:aromatic amino acid family biosynthetic process"/>
    <property type="evidence" value="ECO:0007669"/>
    <property type="project" value="UniProtKB-KW"/>
</dbReference>
<dbReference type="GO" id="GO:0009423">
    <property type="term" value="P:chorismate biosynthetic process"/>
    <property type="evidence" value="ECO:0007669"/>
    <property type="project" value="UniProtKB-UniRule"/>
</dbReference>
<dbReference type="GO" id="GO:0019632">
    <property type="term" value="P:shikimate metabolic process"/>
    <property type="evidence" value="ECO:0007669"/>
    <property type="project" value="InterPro"/>
</dbReference>
<dbReference type="CDD" id="cd01065">
    <property type="entry name" value="NAD_bind_Shikimate_DH"/>
    <property type="match status" value="1"/>
</dbReference>
<dbReference type="Gene3D" id="3.40.50.10860">
    <property type="entry name" value="Leucine Dehydrogenase, chain A, domain 1"/>
    <property type="match status" value="1"/>
</dbReference>
<dbReference type="Gene3D" id="3.40.50.720">
    <property type="entry name" value="NAD(P)-binding Rossmann-like Domain"/>
    <property type="match status" value="1"/>
</dbReference>
<dbReference type="HAMAP" id="MF_00222">
    <property type="entry name" value="Shikimate_DH_AroE"/>
    <property type="match status" value="1"/>
</dbReference>
<dbReference type="InterPro" id="IPR046346">
    <property type="entry name" value="Aminoacid_DH-like_N_sf"/>
</dbReference>
<dbReference type="InterPro" id="IPR036291">
    <property type="entry name" value="NAD(P)-bd_dom_sf"/>
</dbReference>
<dbReference type="InterPro" id="IPR041121">
    <property type="entry name" value="SDH_C"/>
</dbReference>
<dbReference type="InterPro" id="IPR011342">
    <property type="entry name" value="Shikimate_DH"/>
</dbReference>
<dbReference type="InterPro" id="IPR013708">
    <property type="entry name" value="Shikimate_DH-bd_N"/>
</dbReference>
<dbReference type="InterPro" id="IPR022893">
    <property type="entry name" value="Shikimate_DH_fam"/>
</dbReference>
<dbReference type="NCBIfam" id="TIGR00507">
    <property type="entry name" value="aroE"/>
    <property type="match status" value="1"/>
</dbReference>
<dbReference type="PANTHER" id="PTHR21089:SF1">
    <property type="entry name" value="BIFUNCTIONAL 3-DEHYDROQUINATE DEHYDRATASE_SHIKIMATE DEHYDROGENASE, CHLOROPLASTIC"/>
    <property type="match status" value="1"/>
</dbReference>
<dbReference type="PANTHER" id="PTHR21089">
    <property type="entry name" value="SHIKIMATE DEHYDROGENASE"/>
    <property type="match status" value="1"/>
</dbReference>
<dbReference type="Pfam" id="PF18317">
    <property type="entry name" value="SDH_C"/>
    <property type="match status" value="1"/>
</dbReference>
<dbReference type="Pfam" id="PF08501">
    <property type="entry name" value="Shikimate_dh_N"/>
    <property type="match status" value="1"/>
</dbReference>
<dbReference type="SUPFAM" id="SSF53223">
    <property type="entry name" value="Aminoacid dehydrogenase-like, N-terminal domain"/>
    <property type="match status" value="1"/>
</dbReference>
<dbReference type="SUPFAM" id="SSF51735">
    <property type="entry name" value="NAD(P)-binding Rossmann-fold domains"/>
    <property type="match status" value="1"/>
</dbReference>
<organism>
    <name type="scientific">Citrifermentans bemidjiense (strain ATCC BAA-1014 / DSM 16622 / JCM 12645 / Bem)</name>
    <name type="common">Geobacter bemidjiensis</name>
    <dbReference type="NCBI Taxonomy" id="404380"/>
    <lineage>
        <taxon>Bacteria</taxon>
        <taxon>Pseudomonadati</taxon>
        <taxon>Thermodesulfobacteriota</taxon>
        <taxon>Desulfuromonadia</taxon>
        <taxon>Geobacterales</taxon>
        <taxon>Geobacteraceae</taxon>
        <taxon>Citrifermentans</taxon>
    </lineage>
</organism>